<organism>
    <name type="scientific">Rattus norvegicus</name>
    <name type="common">Rat</name>
    <dbReference type="NCBI Taxonomy" id="10116"/>
    <lineage>
        <taxon>Eukaryota</taxon>
        <taxon>Metazoa</taxon>
        <taxon>Chordata</taxon>
        <taxon>Craniata</taxon>
        <taxon>Vertebrata</taxon>
        <taxon>Euteleostomi</taxon>
        <taxon>Mammalia</taxon>
        <taxon>Eutheria</taxon>
        <taxon>Euarchontoglires</taxon>
        <taxon>Glires</taxon>
        <taxon>Rodentia</taxon>
        <taxon>Myomorpha</taxon>
        <taxon>Muroidea</taxon>
        <taxon>Muridae</taxon>
        <taxon>Murinae</taxon>
        <taxon>Rattus</taxon>
    </lineage>
</organism>
<accession>Q810W9</accession>
<evidence type="ECO:0000250" key="1">
    <source>
        <dbReference type="UniProtKB" id="Q80VW5"/>
    </source>
</evidence>
<evidence type="ECO:0000250" key="2">
    <source>
        <dbReference type="UniProtKB" id="Q9P202"/>
    </source>
</evidence>
<evidence type="ECO:0000255" key="3">
    <source>
        <dbReference type="PROSITE-ProRule" id="PRU00143"/>
    </source>
</evidence>
<evidence type="ECO:0000256" key="4">
    <source>
        <dbReference type="SAM" id="MobiDB-lite"/>
    </source>
</evidence>
<evidence type="ECO:0000269" key="5">
    <source>
    </source>
</evidence>
<evidence type="ECO:0000269" key="6">
    <source>
    </source>
</evidence>
<evidence type="ECO:0000269" key="7">
    <source>
    </source>
</evidence>
<evidence type="ECO:0000269" key="8">
    <source>
    </source>
</evidence>
<evidence type="ECO:0000303" key="9">
    <source>
    </source>
</evidence>
<evidence type="ECO:0000312" key="10">
    <source>
        <dbReference type="RGD" id="631330"/>
    </source>
</evidence>
<dbReference type="EMBL" id="AY227205">
    <property type="protein sequence ID" value="AAO72534.1"/>
    <property type="molecule type" value="mRNA"/>
</dbReference>
<dbReference type="RefSeq" id="NP_851602.1">
    <property type="nucleotide sequence ID" value="NM_181088.1"/>
</dbReference>
<dbReference type="SMR" id="Q810W9"/>
<dbReference type="FunCoup" id="Q810W9">
    <property type="interactions" value="530"/>
</dbReference>
<dbReference type="IntAct" id="Q810W9">
    <property type="interactions" value="1"/>
</dbReference>
<dbReference type="MINT" id="Q810W9"/>
<dbReference type="STRING" id="10116.ENSRNOP00000002309"/>
<dbReference type="CarbonylDB" id="Q810W9"/>
<dbReference type="GlyGen" id="Q810W9">
    <property type="glycosylation" value="2 sites"/>
</dbReference>
<dbReference type="iPTMnet" id="Q810W9"/>
<dbReference type="PhosphoSitePlus" id="Q810W9"/>
<dbReference type="PaxDb" id="10116-ENSRNOP00000002309"/>
<dbReference type="GeneID" id="313255"/>
<dbReference type="KEGG" id="rno:313255"/>
<dbReference type="UCSC" id="RGD:631330">
    <property type="organism name" value="rat"/>
</dbReference>
<dbReference type="AGR" id="RGD:631330"/>
<dbReference type="CTD" id="25861"/>
<dbReference type="RGD" id="631330">
    <property type="gene designation" value="Whrn"/>
</dbReference>
<dbReference type="eggNOG" id="KOG3528">
    <property type="taxonomic scope" value="Eukaryota"/>
</dbReference>
<dbReference type="InParanoid" id="Q810W9"/>
<dbReference type="OrthoDB" id="10029564at2759"/>
<dbReference type="PhylomeDB" id="Q810W9"/>
<dbReference type="PRO" id="PR:Q810W9"/>
<dbReference type="Proteomes" id="UP000002494">
    <property type="component" value="Unplaced"/>
</dbReference>
<dbReference type="GO" id="GO:0005884">
    <property type="term" value="C:actin filament"/>
    <property type="evidence" value="ECO:0000266"/>
    <property type="project" value="RGD"/>
</dbReference>
<dbReference type="GO" id="GO:0097440">
    <property type="term" value="C:apical dendrite"/>
    <property type="evidence" value="ECO:0000314"/>
    <property type="project" value="RGD"/>
</dbReference>
<dbReference type="GO" id="GO:0044303">
    <property type="term" value="C:axon collateral"/>
    <property type="evidence" value="ECO:0000314"/>
    <property type="project" value="RGD"/>
</dbReference>
<dbReference type="GO" id="GO:0036064">
    <property type="term" value="C:ciliary basal body"/>
    <property type="evidence" value="ECO:0000266"/>
    <property type="project" value="RGD"/>
</dbReference>
<dbReference type="GO" id="GO:0005929">
    <property type="term" value="C:cilium"/>
    <property type="evidence" value="ECO:0000266"/>
    <property type="project" value="RGD"/>
</dbReference>
<dbReference type="GO" id="GO:0005737">
    <property type="term" value="C:cytoplasm"/>
    <property type="evidence" value="ECO:0000266"/>
    <property type="project" value="RGD"/>
</dbReference>
<dbReference type="GO" id="GO:0043198">
    <property type="term" value="C:dendritic shaft"/>
    <property type="evidence" value="ECO:0000314"/>
    <property type="project" value="RGD"/>
</dbReference>
<dbReference type="GO" id="GO:0030426">
    <property type="term" value="C:growth cone"/>
    <property type="evidence" value="ECO:0007669"/>
    <property type="project" value="UniProtKB-SubCell"/>
</dbReference>
<dbReference type="GO" id="GO:0043005">
    <property type="term" value="C:neuron projection"/>
    <property type="evidence" value="ECO:0000266"/>
    <property type="project" value="RGD"/>
</dbReference>
<dbReference type="GO" id="GO:0043025">
    <property type="term" value="C:neuronal cell body"/>
    <property type="evidence" value="ECO:0000314"/>
    <property type="project" value="RGD"/>
</dbReference>
<dbReference type="GO" id="GO:1990075">
    <property type="term" value="C:periciliary membrane compartment"/>
    <property type="evidence" value="ECO:0000250"/>
    <property type="project" value="UniProtKB"/>
</dbReference>
<dbReference type="GO" id="GO:0048471">
    <property type="term" value="C:perinuclear region of cytoplasm"/>
    <property type="evidence" value="ECO:0000314"/>
    <property type="project" value="RGD"/>
</dbReference>
<dbReference type="GO" id="GO:0032391">
    <property type="term" value="C:photoreceptor connecting cilium"/>
    <property type="evidence" value="ECO:0000314"/>
    <property type="project" value="RGD"/>
</dbReference>
<dbReference type="GO" id="GO:0001917">
    <property type="term" value="C:photoreceptor inner segment"/>
    <property type="evidence" value="ECO:0000314"/>
    <property type="project" value="RGD"/>
</dbReference>
<dbReference type="GO" id="GO:0005886">
    <property type="term" value="C:plasma membrane"/>
    <property type="evidence" value="ECO:0000318"/>
    <property type="project" value="GO_Central"/>
</dbReference>
<dbReference type="GO" id="GO:0098794">
    <property type="term" value="C:postsynapse"/>
    <property type="evidence" value="ECO:0000314"/>
    <property type="project" value="RGD"/>
</dbReference>
<dbReference type="GO" id="GO:0098793">
    <property type="term" value="C:presynapse"/>
    <property type="evidence" value="ECO:0000314"/>
    <property type="project" value="RGD"/>
</dbReference>
<dbReference type="GO" id="GO:0002141">
    <property type="term" value="C:stereocilia ankle link"/>
    <property type="evidence" value="ECO:0000314"/>
    <property type="project" value="UniProtKB"/>
</dbReference>
<dbReference type="GO" id="GO:0002142">
    <property type="term" value="C:stereocilia ankle link complex"/>
    <property type="evidence" value="ECO:0000250"/>
    <property type="project" value="UniProtKB"/>
</dbReference>
<dbReference type="GO" id="GO:0032420">
    <property type="term" value="C:stereocilium"/>
    <property type="evidence" value="ECO:0000314"/>
    <property type="project" value="RGD"/>
</dbReference>
<dbReference type="GO" id="GO:0032421">
    <property type="term" value="C:stereocilium bundle"/>
    <property type="evidence" value="ECO:0000266"/>
    <property type="project" value="RGD"/>
</dbReference>
<dbReference type="GO" id="GO:0032426">
    <property type="term" value="C:stereocilium tip"/>
    <property type="evidence" value="ECO:0000314"/>
    <property type="project" value="UniProtKB"/>
</dbReference>
<dbReference type="GO" id="GO:1990696">
    <property type="term" value="C:USH2 complex"/>
    <property type="evidence" value="ECO:0000250"/>
    <property type="project" value="UniProtKB"/>
</dbReference>
<dbReference type="GO" id="GO:0042802">
    <property type="term" value="F:identical protein binding"/>
    <property type="evidence" value="ECO:0000266"/>
    <property type="project" value="RGD"/>
</dbReference>
<dbReference type="GO" id="GO:0019904">
    <property type="term" value="F:protein domain specific binding"/>
    <property type="evidence" value="ECO:0000353"/>
    <property type="project" value="RGD"/>
</dbReference>
<dbReference type="GO" id="GO:0060088">
    <property type="term" value="P:auditory receptor cell stereocilium organization"/>
    <property type="evidence" value="ECO:0000266"/>
    <property type="project" value="RGD"/>
</dbReference>
<dbReference type="GO" id="GO:0021694">
    <property type="term" value="P:cerebellar Purkinje cell layer formation"/>
    <property type="evidence" value="ECO:0000266"/>
    <property type="project" value="RGD"/>
</dbReference>
<dbReference type="GO" id="GO:0050910">
    <property type="term" value="P:detection of mechanical stimulus involved in sensory perception of sound"/>
    <property type="evidence" value="ECO:0000250"/>
    <property type="project" value="UniProtKB"/>
</dbReference>
<dbReference type="GO" id="GO:0051649">
    <property type="term" value="P:establishment of localization in cell"/>
    <property type="evidence" value="ECO:0000266"/>
    <property type="project" value="RGD"/>
</dbReference>
<dbReference type="GO" id="GO:0045184">
    <property type="term" value="P:establishment of protein localization"/>
    <property type="evidence" value="ECO:0000250"/>
    <property type="project" value="UniProtKB"/>
</dbReference>
<dbReference type="GO" id="GO:0060122">
    <property type="term" value="P:inner ear receptor cell stereocilium organization"/>
    <property type="evidence" value="ECO:0000250"/>
    <property type="project" value="UniProtKB"/>
</dbReference>
<dbReference type="GO" id="GO:1990227">
    <property type="term" value="P:paranodal junction maintenance"/>
    <property type="evidence" value="ECO:0000266"/>
    <property type="project" value="RGD"/>
</dbReference>
<dbReference type="GO" id="GO:0010628">
    <property type="term" value="P:positive regulation of gene expression"/>
    <property type="evidence" value="ECO:0000266"/>
    <property type="project" value="RGD"/>
</dbReference>
<dbReference type="GO" id="GO:0001895">
    <property type="term" value="P:retina homeostasis"/>
    <property type="evidence" value="ECO:0000250"/>
    <property type="project" value="UniProtKB"/>
</dbReference>
<dbReference type="GO" id="GO:0050953">
    <property type="term" value="P:sensory perception of light stimulus"/>
    <property type="evidence" value="ECO:0000266"/>
    <property type="project" value="RGD"/>
</dbReference>
<dbReference type="GO" id="GO:0007605">
    <property type="term" value="P:sensory perception of sound"/>
    <property type="evidence" value="ECO:0000266"/>
    <property type="project" value="RGD"/>
</dbReference>
<dbReference type="CDD" id="cd07356">
    <property type="entry name" value="HN_L-whirlin_R1_like"/>
    <property type="match status" value="1"/>
</dbReference>
<dbReference type="CDD" id="cd07357">
    <property type="entry name" value="HN_L-whirlin_R2_like"/>
    <property type="match status" value="1"/>
</dbReference>
<dbReference type="CDD" id="cd06740">
    <property type="entry name" value="PDZ1_FL-whirlin"/>
    <property type="match status" value="1"/>
</dbReference>
<dbReference type="CDD" id="cd06741">
    <property type="entry name" value="PDZ2_FL-whirlin"/>
    <property type="match status" value="1"/>
</dbReference>
<dbReference type="CDD" id="cd06742">
    <property type="entry name" value="PDZ3_FL-whirlin-like"/>
    <property type="match status" value="1"/>
</dbReference>
<dbReference type="FunFam" id="1.20.1160.20:FF:000002">
    <property type="entry name" value="Whirlin a"/>
    <property type="match status" value="1"/>
</dbReference>
<dbReference type="FunFam" id="1.20.1160.20:FF:000003">
    <property type="entry name" value="Whirlin a"/>
    <property type="match status" value="1"/>
</dbReference>
<dbReference type="FunFam" id="2.30.42.10:FF:000079">
    <property type="entry name" value="Whirlin a"/>
    <property type="match status" value="1"/>
</dbReference>
<dbReference type="FunFam" id="2.30.42.10:FF:000087">
    <property type="entry name" value="Whirlin a"/>
    <property type="match status" value="1"/>
</dbReference>
<dbReference type="FunFam" id="2.30.42.10:FF:000111">
    <property type="entry name" value="Whirlin a"/>
    <property type="match status" value="1"/>
</dbReference>
<dbReference type="Gene3D" id="1.20.1160.20">
    <property type="match status" value="2"/>
</dbReference>
<dbReference type="Gene3D" id="2.30.42.10">
    <property type="match status" value="3"/>
</dbReference>
<dbReference type="InterPro" id="IPR001478">
    <property type="entry name" value="PDZ"/>
</dbReference>
<dbReference type="InterPro" id="IPR036034">
    <property type="entry name" value="PDZ_sf"/>
</dbReference>
<dbReference type="InterPro" id="IPR051844">
    <property type="entry name" value="USH2_Complex_Protein"/>
</dbReference>
<dbReference type="InterPro" id="IPR047056">
    <property type="entry name" value="Whirlin_HN-like_dom1"/>
</dbReference>
<dbReference type="InterPro" id="IPR033028">
    <property type="entry name" value="Whirlin_HN-like_dom2"/>
</dbReference>
<dbReference type="PANTHER" id="PTHR23116">
    <property type="entry name" value="PDZ DOMAIN CONTAINING WHIRLIN AND HARMONIN-RELATED"/>
    <property type="match status" value="1"/>
</dbReference>
<dbReference type="PANTHER" id="PTHR23116:SF37">
    <property type="entry name" value="WHIRLIN"/>
    <property type="match status" value="1"/>
</dbReference>
<dbReference type="Pfam" id="PF00595">
    <property type="entry name" value="PDZ"/>
    <property type="match status" value="3"/>
</dbReference>
<dbReference type="SMART" id="SM00228">
    <property type="entry name" value="PDZ"/>
    <property type="match status" value="3"/>
</dbReference>
<dbReference type="SUPFAM" id="SSF50156">
    <property type="entry name" value="PDZ domain-like"/>
    <property type="match status" value="3"/>
</dbReference>
<dbReference type="PROSITE" id="PS50106">
    <property type="entry name" value="PDZ"/>
    <property type="match status" value="3"/>
</dbReference>
<proteinExistence type="evidence at protein level"/>
<reference key="1">
    <citation type="journal article" date="2003" name="J. Neurochem.">
        <title>CIP98, a novel PDZ domain protein, is expressed in the central nervous system and interacts with calmodulin-dependent serine kinase.</title>
        <authorList>
            <person name="Yap C.C."/>
            <person name="Liang F."/>
            <person name="Yamazaki Y."/>
            <person name="Muto Y."/>
            <person name="Kishida H."/>
            <person name="Hayashida T."/>
            <person name="Hashikawa T."/>
            <person name="Yano R."/>
        </authorList>
    </citation>
    <scope>NUCLEOTIDE SEQUENCE [MRNA]</scope>
    <scope>INTERACTION WITH CASK</scope>
    <scope>SUBCELLULAR LOCATION</scope>
    <scope>TISSUE SPECIFICITY</scope>
    <source>
        <strain>Wistar</strain>
        <tissue>Brain</tissue>
        <tissue>Cerebellum</tissue>
    </source>
</reference>
<reference key="2">
    <citation type="journal article" date="2007" name="Hum. Mol. Genet.">
        <title>MPP1 links the Usher protein network and the Crumbs protein complex in the retina.</title>
        <authorList>
            <person name="Gosens I."/>
            <person name="van Wijk E."/>
            <person name="Kersten F.F."/>
            <person name="Krieger E."/>
            <person name="van der Zwaag B."/>
            <person name="Maerker T."/>
            <person name="Letteboer S.J."/>
            <person name="Dusseljee S."/>
            <person name="Peters T."/>
            <person name="Spierenburg H.A."/>
            <person name="Punte I.M."/>
            <person name="Wolfrum U."/>
            <person name="Cremers F.P.M."/>
            <person name="Kremer H."/>
            <person name="Roepman R."/>
        </authorList>
    </citation>
    <scope>SUBCELLULAR LOCATION</scope>
</reference>
<reference key="3">
    <citation type="journal article" date="2006" name="Hum. Mol. Genet.">
        <title>The DFNB31 gene product whirlin connects to the Usher protein network in the cochlea and retina by direct association with USH2A and VLGR1.</title>
        <authorList>
            <person name="van Wijk E."/>
            <person name="van der Zwaag B."/>
            <person name="Peters T."/>
            <person name="Zimmermann U."/>
            <person name="Te Brinke H."/>
            <person name="Kersten F.F.J."/>
            <person name="Maerker T."/>
            <person name="Aller E."/>
            <person name="Hoefsloot L.H."/>
            <person name="Cremers C.W.R.J."/>
            <person name="Cremers F.P.M."/>
            <person name="Wolfrum U."/>
            <person name="Knipper M."/>
            <person name="Roepman R."/>
            <person name="Kremer H."/>
        </authorList>
    </citation>
    <scope>TISSUE SPECIFICITY</scope>
    <scope>SUBCELLULAR LOCATION</scope>
</reference>
<reference key="4">
    <citation type="journal article" date="2012" name="J. Neurosci.">
        <title>Localization of PDZD7 to the stereocilia ankle-link associates this scaffolding protein with the Usher syndrome protein network.</title>
        <authorList>
            <person name="Grati M."/>
            <person name="Shin J.B."/>
            <person name="Weston M.D."/>
            <person name="Green J."/>
            <person name="Bhat M.A."/>
            <person name="Gillespie P.G."/>
            <person name="Kachar B."/>
        </authorList>
    </citation>
    <scope>SUBCELLULAR LOCATION</scope>
    <scope>TISSUE SPECIFICITY</scope>
</reference>
<feature type="chain" id="PRO_0000065970" description="Whirlin">
    <location>
        <begin position="1"/>
        <end position="920"/>
    </location>
</feature>
<feature type="domain" description="PDZ 1" evidence="3">
    <location>
        <begin position="141"/>
        <end position="224"/>
    </location>
</feature>
<feature type="domain" description="PDZ 2" evidence="3">
    <location>
        <begin position="278"/>
        <end position="360"/>
    </location>
</feature>
<feature type="domain" description="PDZ 3" evidence="3">
    <location>
        <begin position="829"/>
        <end position="912"/>
    </location>
</feature>
<feature type="region of interest" description="Disordered" evidence="4">
    <location>
        <begin position="241"/>
        <end position="262"/>
    </location>
</feature>
<feature type="region of interest" description="Disordered" evidence="4">
    <location>
        <begin position="502"/>
        <end position="536"/>
    </location>
</feature>
<feature type="region of interest" description="Disordered" evidence="4">
    <location>
        <begin position="561"/>
        <end position="603"/>
    </location>
</feature>
<feature type="region of interest" description="Disordered" evidence="4">
    <location>
        <begin position="630"/>
        <end position="730"/>
    </location>
</feature>
<feature type="region of interest" description="Disordered" evidence="4">
    <location>
        <begin position="752"/>
        <end position="828"/>
    </location>
</feature>
<feature type="compositionally biased region" description="Polar residues" evidence="4">
    <location>
        <begin position="242"/>
        <end position="257"/>
    </location>
</feature>
<feature type="compositionally biased region" description="Low complexity" evidence="4">
    <location>
        <begin position="520"/>
        <end position="536"/>
    </location>
</feature>
<feature type="compositionally biased region" description="Polar residues" evidence="4">
    <location>
        <begin position="561"/>
        <end position="570"/>
    </location>
</feature>
<feature type="compositionally biased region" description="Pro residues" evidence="4">
    <location>
        <begin position="589"/>
        <end position="598"/>
    </location>
</feature>
<feature type="compositionally biased region" description="Pro residues" evidence="4">
    <location>
        <begin position="636"/>
        <end position="651"/>
    </location>
</feature>
<feature type="compositionally biased region" description="Polar residues" evidence="4">
    <location>
        <begin position="655"/>
        <end position="674"/>
    </location>
</feature>
<feature type="compositionally biased region" description="Polar residues" evidence="4">
    <location>
        <begin position="756"/>
        <end position="775"/>
    </location>
</feature>
<feature type="compositionally biased region" description="Polar residues" evidence="4">
    <location>
        <begin position="785"/>
        <end position="800"/>
    </location>
</feature>
<feature type="compositionally biased region" description="Basic and acidic residues" evidence="4">
    <location>
        <begin position="802"/>
        <end position="813"/>
    </location>
</feature>
<feature type="modified residue" description="Phosphoserine" evidence="2">
    <location>
        <position position="698"/>
    </location>
</feature>
<sequence length="920" mass="98345">MNAQLDGLSVSSSSTGSLGSAAAAAGGGGGAGLRLLSANVRQLHQALTALLSEPEREQFTHCLNAYHARRNVFDLVRTLRVLLDSPVKRRLLPMLRLVIPRSDQLLFDQYTAEGLYLPATTPYRQPAWAAPDGAGPGEVRLVSLRRAKAHEGLGFSIRGGSEHGVGIYVSLVEPGSLAEKEGLRVGDQILRVNDKSLARVTHAEAVKALKGSKKLVLSVYSAGRIPGGYVTNHIYTWVDPQGRSTSPPSSLPHGSTLRQHEDDRRSALHLLQSGDEKKVNLVLGDGRSLGLTIRGGAEYGLGIYITGVDPGSEAESSGLKVGDQILEVNGRSFLSILHDEAVKLLKSSRHLILTVKDVGRLPHARTTVDQTKWIASSRIGESITNSAGFPGDLTEEGTNKPGFYKGPAGSQVTLSSLGNQTRALLDDQARHLLTEQERATMMYYLDQYRGGTISVEALVMALFELLNTHAKFSLLSEVRGIISPQDLDRFDHLVLRREIESMKARQPPGPGVGDTYSMVSYSDTGSSTGSHGTSTTVSSARERLLWLIDLMENTLDLEGTCETTQGSTNALPDVSVDDVRSPSEDLPGIKPPPPPPPLAQGHDRLLGQTRKPVREDSAPLSSAAHSGIVFSAPRNRSPPPPPGIAPTPTPGPSSARDSPSSPIYASISHANPSSRKPLDTHLALVNQHPIGPFPRVQSPPHLKSPPAEAPGAGACLPPPSPSEHADAMGANQHFVLVEVHRPDSEPDVNEVRALPQTRTASTLSQLSDSGQTLSEDSGVDAGETEASTSGRGRQTANTKNKNGKELPQTERTTEGANKPPGLLEPTSTLIRVRKSAATLGIAIEGGANTRQPLPRIVTIQRGGSAHNCGQLKVGHVILEVNGQTLRGKEHREAARVIAEAFKTKERDYIDFLVTEFNVML</sequence>
<name>WHRN_RAT</name>
<gene>
    <name evidence="10" type="primary">Whrn</name>
    <name evidence="9" type="synonym">Cip98</name>
    <name type="synonym">Dfnb31</name>
</gene>
<protein>
    <recommendedName>
        <fullName>Whirlin</fullName>
    </recommendedName>
    <alternativeName>
        <fullName>CASK-interacting protein CIP98</fullName>
    </alternativeName>
</protein>
<keyword id="KW-0966">Cell projection</keyword>
<keyword id="KW-0963">Cytoplasm</keyword>
<keyword id="KW-1009">Hearing</keyword>
<keyword id="KW-0597">Phosphoprotein</keyword>
<keyword id="KW-1185">Reference proteome</keyword>
<keyword id="KW-0677">Repeat</keyword>
<keyword id="KW-0770">Synapse</keyword>
<comment type="function">
    <text evidence="1">Involved in hearing and vision as member of the USH2 complex. Necessary for elongation and maintenance of inner and outer hair cell stereocilia in the organ of Corti in the inner ear. Involved in the maintenance of the hair bundle ankle region, which connects stereocilia in cochlear hair cells of the inner ear. In retina photoreceptors, required for the maintenance of periciliary membrane complex that seems to play a role in regulating intracellular protein transport.</text>
</comment>
<comment type="subunit">
    <text evidence="1 2 5">Forms homooligomers (By similarity). Interacts (via C-terminal PDZ domain) with MYO15A; this interaction is necessary for localization of WHRN to stereocilia tips. Interacts (via C-terminal PDZ domain) with MPP1/p55. Interacts with LRRC4C/NGL1. Interacts with MYO7A. Interacts with RPGR. Interacts with EPS8 (By similarity). Interacts with CASK (PubMed:12641734). Interacts with CIB2 (By similarity). Component of USH2 complex, composed of ADGRV1, PDZD7, USH2A and WHRN. Interacts (via PDZ domains) with PDZD7; the interaction is direct. Interacts (via N-terminal PDZ domain) with USH2A (via cytoplasmic region). Interacts with ADGRV1/MASS1 (via cytoplasmic region) (By similarity).</text>
</comment>
<comment type="subcellular location">
    <subcellularLocation>
        <location evidence="1">Cytoplasm</location>
    </subcellularLocation>
    <subcellularLocation>
        <location evidence="6 8">Cell projection</location>
        <location evidence="6 8">Stereocilium</location>
    </subcellularLocation>
    <subcellularLocation>
        <location evidence="5">Cell projection</location>
        <location evidence="5">Growth cone</location>
    </subcellularLocation>
    <subcellularLocation>
        <location evidence="5 6">Synapse</location>
    </subcellularLocation>
    <text evidence="1 6 7 8">Detected at the level of stereocilia in inner outer hair cells of the cochlea and vestibule (PubMed:16434480). Localizes to both tip and ankle-link stereocilia regions (PubMed:23055499). Colocalizes with the growing ends of actin filaments (By similarity). Colocalizes with MPP1 in the retina, at the outer limiting membrane (OLM), outer plexifirm layer (OPL), basal bodies and at the connecting cilium (CC) (PubMed:16434480, PubMed:17584769). In photoreceptors, localizes at a plasma membrane microdomain in the apical inner segment that surrounds the connecting cilia called periciliary membrane complex (By similarity).</text>
</comment>
<comment type="tissue specificity">
    <text evidence="5 6 8">Ubiquitous. Highly expressed in heart, spleen, lung and liver. Highly expressed in brain, in the olfactory bulb, thalamus, layers III-V of the cerebral cortex and the molecular layer of cerebellum. Detected in soma and dendrites of thalamic neurons, and in cerebrum in cell bodies and apical dendrites of pyramidal neurons. Expressed in retina and inner ear (PubMed:16434480, PubMed:23055499).</text>
</comment>